<dbReference type="EMBL" id="CU329672">
    <property type="protein sequence ID" value="CAB76221.1"/>
    <property type="molecule type" value="Genomic_DNA"/>
</dbReference>
<dbReference type="PIR" id="T50419">
    <property type="entry name" value="T50419"/>
</dbReference>
<dbReference type="RefSeq" id="NP_588015.1">
    <property type="nucleotide sequence ID" value="NM_001023006.2"/>
</dbReference>
<dbReference type="SMR" id="Q9P7J3"/>
<dbReference type="BioGRID" id="275953">
    <property type="interactions" value="80"/>
</dbReference>
<dbReference type="FunCoup" id="Q9P7J3">
    <property type="interactions" value="219"/>
</dbReference>
<dbReference type="STRING" id="284812.Q9P7J3"/>
<dbReference type="PaxDb" id="4896-SPCC24B10.12.1"/>
<dbReference type="EnsemblFungi" id="SPCC24B10.12.1">
    <property type="protein sequence ID" value="SPCC24B10.12.1:pep"/>
    <property type="gene ID" value="SPCC24B10.12"/>
</dbReference>
<dbReference type="GeneID" id="2539388"/>
<dbReference type="KEGG" id="spo:2539388"/>
<dbReference type="PomBase" id="SPCC24B10.12">
    <property type="gene designation" value="cgi121"/>
</dbReference>
<dbReference type="VEuPathDB" id="FungiDB:SPCC24B10.12"/>
<dbReference type="eggNOG" id="KOG4066">
    <property type="taxonomic scope" value="Eukaryota"/>
</dbReference>
<dbReference type="HOGENOM" id="CLU_065847_1_1_1"/>
<dbReference type="InParanoid" id="Q9P7J3"/>
<dbReference type="OMA" id="IVCRMST"/>
<dbReference type="PhylomeDB" id="Q9P7J3"/>
<dbReference type="PRO" id="PR:Q9P7J3"/>
<dbReference type="Proteomes" id="UP000002485">
    <property type="component" value="Chromosome III"/>
</dbReference>
<dbReference type="GO" id="GO:0000781">
    <property type="term" value="C:chromosome, telomeric region"/>
    <property type="evidence" value="ECO:0007669"/>
    <property type="project" value="UniProtKB-SubCell"/>
</dbReference>
<dbReference type="GO" id="GO:0005829">
    <property type="term" value="C:cytosol"/>
    <property type="evidence" value="ECO:0007005"/>
    <property type="project" value="PomBase"/>
</dbReference>
<dbReference type="GO" id="GO:0000408">
    <property type="term" value="C:EKC/KEOPS complex"/>
    <property type="evidence" value="ECO:0000318"/>
    <property type="project" value="GO_Central"/>
</dbReference>
<dbReference type="GO" id="GO:0005634">
    <property type="term" value="C:nucleus"/>
    <property type="evidence" value="ECO:0007005"/>
    <property type="project" value="PomBase"/>
</dbReference>
<dbReference type="GO" id="GO:0002949">
    <property type="term" value="P:tRNA threonylcarbamoyladenosine modification"/>
    <property type="evidence" value="ECO:0000318"/>
    <property type="project" value="GO_Central"/>
</dbReference>
<dbReference type="Gene3D" id="3.30.2380.10">
    <property type="entry name" value="CGI121/TPRKB"/>
    <property type="match status" value="1"/>
</dbReference>
<dbReference type="InterPro" id="IPR013926">
    <property type="entry name" value="CGI121/TPRKB"/>
</dbReference>
<dbReference type="InterPro" id="IPR036504">
    <property type="entry name" value="CGI121/TPRKB_sf"/>
</dbReference>
<dbReference type="PANTHER" id="PTHR15840">
    <property type="entry name" value="CGI-121 FAMILY MEMBER"/>
    <property type="match status" value="1"/>
</dbReference>
<dbReference type="PANTHER" id="PTHR15840:SF10">
    <property type="entry name" value="EKC_KEOPS COMPLEX SUBUNIT TPRKB"/>
    <property type="match status" value="1"/>
</dbReference>
<dbReference type="Pfam" id="PF08617">
    <property type="entry name" value="CGI-121"/>
    <property type="match status" value="1"/>
</dbReference>
<dbReference type="SUPFAM" id="SSF143870">
    <property type="entry name" value="PF0523-like"/>
    <property type="match status" value="1"/>
</dbReference>
<evidence type="ECO:0000250" key="1"/>
<evidence type="ECO:0000305" key="2"/>
<feature type="chain" id="PRO_0000279217" description="EKC/KEOPS complex subunit cgi121">
    <location>
        <begin position="1"/>
        <end position="174"/>
    </location>
</feature>
<protein>
    <recommendedName>
        <fullName>EKC/KEOPS complex subunit cgi121</fullName>
    </recommendedName>
</protein>
<gene>
    <name type="primary">cgi121</name>
    <name type="ORF">SPCC24B10.12</name>
</gene>
<reference key="1">
    <citation type="journal article" date="2002" name="Nature">
        <title>The genome sequence of Schizosaccharomyces pombe.</title>
        <authorList>
            <person name="Wood V."/>
            <person name="Gwilliam R."/>
            <person name="Rajandream M.A."/>
            <person name="Lyne M.H."/>
            <person name="Lyne R."/>
            <person name="Stewart A."/>
            <person name="Sgouros J.G."/>
            <person name="Peat N."/>
            <person name="Hayles J."/>
            <person name="Baker S.G."/>
            <person name="Basham D."/>
            <person name="Bowman S."/>
            <person name="Brooks K."/>
            <person name="Brown D."/>
            <person name="Brown S."/>
            <person name="Chillingworth T."/>
            <person name="Churcher C.M."/>
            <person name="Collins M."/>
            <person name="Connor R."/>
            <person name="Cronin A."/>
            <person name="Davis P."/>
            <person name="Feltwell T."/>
            <person name="Fraser A."/>
            <person name="Gentles S."/>
            <person name="Goble A."/>
            <person name="Hamlin N."/>
            <person name="Harris D.E."/>
            <person name="Hidalgo J."/>
            <person name="Hodgson G."/>
            <person name="Holroyd S."/>
            <person name="Hornsby T."/>
            <person name="Howarth S."/>
            <person name="Huckle E.J."/>
            <person name="Hunt S."/>
            <person name="Jagels K."/>
            <person name="James K.D."/>
            <person name="Jones L."/>
            <person name="Jones M."/>
            <person name="Leather S."/>
            <person name="McDonald S."/>
            <person name="McLean J."/>
            <person name="Mooney P."/>
            <person name="Moule S."/>
            <person name="Mungall K.L."/>
            <person name="Murphy L.D."/>
            <person name="Niblett D."/>
            <person name="Odell C."/>
            <person name="Oliver K."/>
            <person name="O'Neil S."/>
            <person name="Pearson D."/>
            <person name="Quail M.A."/>
            <person name="Rabbinowitsch E."/>
            <person name="Rutherford K.M."/>
            <person name="Rutter S."/>
            <person name="Saunders D."/>
            <person name="Seeger K."/>
            <person name="Sharp S."/>
            <person name="Skelton J."/>
            <person name="Simmonds M.N."/>
            <person name="Squares R."/>
            <person name="Squares S."/>
            <person name="Stevens K."/>
            <person name="Taylor K."/>
            <person name="Taylor R.G."/>
            <person name="Tivey A."/>
            <person name="Walsh S.V."/>
            <person name="Warren T."/>
            <person name="Whitehead S."/>
            <person name="Woodward J.R."/>
            <person name="Volckaert G."/>
            <person name="Aert R."/>
            <person name="Robben J."/>
            <person name="Grymonprez B."/>
            <person name="Weltjens I."/>
            <person name="Vanstreels E."/>
            <person name="Rieger M."/>
            <person name="Schaefer M."/>
            <person name="Mueller-Auer S."/>
            <person name="Gabel C."/>
            <person name="Fuchs M."/>
            <person name="Duesterhoeft A."/>
            <person name="Fritzc C."/>
            <person name="Holzer E."/>
            <person name="Moestl D."/>
            <person name="Hilbert H."/>
            <person name="Borzym K."/>
            <person name="Langer I."/>
            <person name="Beck A."/>
            <person name="Lehrach H."/>
            <person name="Reinhardt R."/>
            <person name="Pohl T.M."/>
            <person name="Eger P."/>
            <person name="Zimmermann W."/>
            <person name="Wedler H."/>
            <person name="Wambutt R."/>
            <person name="Purnelle B."/>
            <person name="Goffeau A."/>
            <person name="Cadieu E."/>
            <person name="Dreano S."/>
            <person name="Gloux S."/>
            <person name="Lelaure V."/>
            <person name="Mottier S."/>
            <person name="Galibert F."/>
            <person name="Aves S.J."/>
            <person name="Xiang Z."/>
            <person name="Hunt C."/>
            <person name="Moore K."/>
            <person name="Hurst S.M."/>
            <person name="Lucas M."/>
            <person name="Rochet M."/>
            <person name="Gaillardin C."/>
            <person name="Tallada V.A."/>
            <person name="Garzon A."/>
            <person name="Thode G."/>
            <person name="Daga R.R."/>
            <person name="Cruzado L."/>
            <person name="Jimenez J."/>
            <person name="Sanchez M."/>
            <person name="del Rey F."/>
            <person name="Benito J."/>
            <person name="Dominguez A."/>
            <person name="Revuelta J.L."/>
            <person name="Moreno S."/>
            <person name="Armstrong J."/>
            <person name="Forsburg S.L."/>
            <person name="Cerutti L."/>
            <person name="Lowe T."/>
            <person name="McCombie W.R."/>
            <person name="Paulsen I."/>
            <person name="Potashkin J."/>
            <person name="Shpakovski G.V."/>
            <person name="Ussery D."/>
            <person name="Barrell B.G."/>
            <person name="Nurse P."/>
        </authorList>
    </citation>
    <scope>NUCLEOTIDE SEQUENCE [LARGE SCALE GENOMIC DNA]</scope>
    <source>
        <strain>972 / ATCC 24843</strain>
    </source>
</reference>
<name>CG121_SCHPO</name>
<sequence>MILPLFPETQVHVFVYENVSNCAAIHEQLISQNPIYDYAFLDAATILYKKQVYSAIIRALEDRRDEQMKTKTIHSEVILSLSPKTEISSAFRQFSMTKKSKNIVVVKIDSKLTEEEEFERLDKLVEGNRVEFSDEELQKLIDFKVLKKNYKLDPSTLENPLASILSSIALRGYS</sequence>
<keyword id="KW-0010">Activator</keyword>
<keyword id="KW-0158">Chromosome</keyword>
<keyword id="KW-0539">Nucleus</keyword>
<keyword id="KW-1185">Reference proteome</keyword>
<keyword id="KW-0779">Telomere</keyword>
<keyword id="KW-0804">Transcription</keyword>
<keyword id="KW-0805">Transcription regulation</keyword>
<keyword id="KW-0819">tRNA processing</keyword>
<accession>Q9P7J3</accession>
<comment type="function">
    <text evidence="1">Component of the EKC/KEOPS complex that is required for the formation of a threonylcarbamoyl group on adenosine at position 37 (t(6)A37) in tRNAs that read codons beginning with adenine. The complex is probably involved in the transfer of the threonylcarbamoyl moiety of threonylcarbamoyl-AMP (TC-AMP) to the N6 group of A37. Cgi121 acts as an allosteric effector that regulates the t(6)A activity of the complex. The EKC/KEOPS complex also promotes both telomere uncapping and telomere elongation. The complex is required for efficient recruitment of transcriptional coactivators. Cgi121 is not required for tRNA modification (By similarity).</text>
</comment>
<comment type="subunit">
    <text evidence="1">Component of the EKC/KEOPS complex composed of at least of SPAP27G11.07c/BUD32, cgi121, gon7, pgp2 and SPAC4H3.13/PCC1; the whole complex dimerizes.</text>
</comment>
<comment type="subcellular location">
    <subcellularLocation>
        <location evidence="1">Nucleus</location>
    </subcellularLocation>
    <subcellularLocation>
        <location evidence="1">Chromosome</location>
        <location evidence="1">Telomere</location>
    </subcellularLocation>
</comment>
<comment type="similarity">
    <text evidence="2">Belongs to the CGI121/TPRKB family.</text>
</comment>
<organism>
    <name type="scientific">Schizosaccharomyces pombe (strain 972 / ATCC 24843)</name>
    <name type="common">Fission yeast</name>
    <dbReference type="NCBI Taxonomy" id="284812"/>
    <lineage>
        <taxon>Eukaryota</taxon>
        <taxon>Fungi</taxon>
        <taxon>Dikarya</taxon>
        <taxon>Ascomycota</taxon>
        <taxon>Taphrinomycotina</taxon>
        <taxon>Schizosaccharomycetes</taxon>
        <taxon>Schizosaccharomycetales</taxon>
        <taxon>Schizosaccharomycetaceae</taxon>
        <taxon>Schizosaccharomyces</taxon>
    </lineage>
</organism>
<proteinExistence type="inferred from homology"/>